<sequence length="227" mass="25933">MAYPFELGFQDATSPIMEELLHFHDHTLMIVFLISSLVLYIISLMLTTKLTHTSTMDAQEVETIWTILPAIILILIALPSLRILYMMDEINDPSLTVKTMGHQWYWSYEYTDYEDLNFDSYMIPTSDLSPGELRLLEVDNRVVLPMELPIRMLISSEDVLHSWAVPSLGLKTDAIPGRLNQATLTSTRPGLYYGQCSEICGSNHSFMPIVLELVPLKHFENWSSSML</sequence>
<keyword id="KW-0186">Copper</keyword>
<keyword id="KW-0249">Electron transport</keyword>
<keyword id="KW-0460">Magnesium</keyword>
<keyword id="KW-0472">Membrane</keyword>
<keyword id="KW-0479">Metal-binding</keyword>
<keyword id="KW-0496">Mitochondrion</keyword>
<keyword id="KW-0999">Mitochondrion inner membrane</keyword>
<keyword id="KW-0679">Respiratory chain</keyword>
<keyword id="KW-1278">Translocase</keyword>
<keyword id="KW-0812">Transmembrane</keyword>
<keyword id="KW-1133">Transmembrane helix</keyword>
<keyword id="KW-0813">Transport</keyword>
<organism>
    <name type="scientific">Tamias sonomae</name>
    <name type="common">Sonoma chipmunk</name>
    <name type="synonym">Neotamias sonomae</name>
    <dbReference type="NCBI Taxonomy" id="123795"/>
    <lineage>
        <taxon>Eukaryota</taxon>
        <taxon>Metazoa</taxon>
        <taxon>Chordata</taxon>
        <taxon>Craniata</taxon>
        <taxon>Vertebrata</taxon>
        <taxon>Euteleostomi</taxon>
        <taxon>Mammalia</taxon>
        <taxon>Eutheria</taxon>
        <taxon>Euarchontoglires</taxon>
        <taxon>Glires</taxon>
        <taxon>Rodentia</taxon>
        <taxon>Sciuromorpha</taxon>
        <taxon>Sciuridae</taxon>
        <taxon>Xerinae</taxon>
        <taxon>Marmotini</taxon>
        <taxon>Tamias</taxon>
    </lineage>
</organism>
<comment type="function">
    <text evidence="2">Component of the cytochrome c oxidase, the last enzyme in the mitochondrial electron transport chain which drives oxidative phosphorylation. The respiratory chain contains 3 multisubunit complexes succinate dehydrogenase (complex II, CII), ubiquinol-cytochrome c oxidoreductase (cytochrome b-c1 complex, complex III, CIII) and cytochrome c oxidase (complex IV, CIV), that cooperate to transfer electrons derived from NADH and succinate to molecular oxygen, creating an electrochemical gradient over the inner membrane that drives transmembrane transport and the ATP synthase. Cytochrome c oxidase is the component of the respiratory chain that catalyzes the reduction of oxygen to water. Electrons originating from reduced cytochrome c in the intermembrane space (IMS) are transferred via the dinuclear copper A center (CU(A)) of subunit 2 and heme A of subunit 1 to the active site in subunit 1, a binuclear center (BNC) formed by heme A3 and copper B (CU(B)). The BNC reduces molecular oxygen to 2 water molecules using 4 electrons from cytochrome c in the IMS and 4 protons from the mitochondrial matrix.</text>
</comment>
<comment type="catalytic activity">
    <reaction evidence="2">
        <text>4 Fe(II)-[cytochrome c] + O2 + 8 H(+)(in) = 4 Fe(III)-[cytochrome c] + 2 H2O + 4 H(+)(out)</text>
        <dbReference type="Rhea" id="RHEA:11436"/>
        <dbReference type="Rhea" id="RHEA-COMP:10350"/>
        <dbReference type="Rhea" id="RHEA-COMP:14399"/>
        <dbReference type="ChEBI" id="CHEBI:15377"/>
        <dbReference type="ChEBI" id="CHEBI:15378"/>
        <dbReference type="ChEBI" id="CHEBI:15379"/>
        <dbReference type="ChEBI" id="CHEBI:29033"/>
        <dbReference type="ChEBI" id="CHEBI:29034"/>
        <dbReference type="EC" id="7.1.1.9"/>
    </reaction>
    <physiologicalReaction direction="left-to-right" evidence="2">
        <dbReference type="Rhea" id="RHEA:11437"/>
    </physiologicalReaction>
</comment>
<comment type="cofactor">
    <cofactor evidence="3">
        <name>Cu cation</name>
        <dbReference type="ChEBI" id="CHEBI:23378"/>
    </cofactor>
    <text evidence="3">Binds a dinuclear copper A center per subunit.</text>
</comment>
<comment type="subunit">
    <text evidence="1 3">Component of the cytochrome c oxidase (complex IV, CIV), a multisubunit enzyme composed of 14 subunits. The complex is composed of a catalytic core of 3 subunits MT-CO1, MT-CO2 and MT-CO3, encoded in the mitochondrial DNA, and 11 supernumerary subunits COX4I, COX5A, COX5B, COX6A, COX6B, COX6C, COX7A, COX7B, COX7C, COX8 and NDUFA4, which are encoded in the nuclear genome. The complex exists as a monomer or a dimer and forms supercomplexes (SCs) in the inner mitochondrial membrane with NADH-ubiquinone oxidoreductase (complex I, CI) and ubiquinol-cytochrome c oxidoreductase (cytochrome b-c1 complex, complex III, CIII), resulting in different assemblies (supercomplex SCI(1)III(2)IV(1) and megacomplex MCI(2)III(2)IV(2)) (By similarity). Found in a complex with TMEM177, COA6, COX18, COX20, SCO1 and SCO2. Interacts with TMEM177 in a COX20-dependent manner. Interacts with COX20. Interacts with COX16 (By similarity).</text>
</comment>
<comment type="subcellular location">
    <subcellularLocation>
        <location evidence="3">Mitochondrion inner membrane</location>
        <topology evidence="3">Multi-pass membrane protein</topology>
    </subcellularLocation>
</comment>
<comment type="similarity">
    <text evidence="4">Belongs to the cytochrome c oxidase subunit 2 family.</text>
</comment>
<accession>Q9G0U1</accession>
<accession>Q9G5T5</accession>
<dbReference type="EC" id="7.1.1.9"/>
<dbReference type="EMBL" id="AF147620">
    <property type="protein sequence ID" value="AAG42613.1"/>
    <property type="molecule type" value="Genomic_DNA"/>
</dbReference>
<dbReference type="SMR" id="Q9G0U1"/>
<dbReference type="GO" id="GO:0005743">
    <property type="term" value="C:mitochondrial inner membrane"/>
    <property type="evidence" value="ECO:0007669"/>
    <property type="project" value="UniProtKB-SubCell"/>
</dbReference>
<dbReference type="GO" id="GO:0045277">
    <property type="term" value="C:respiratory chain complex IV"/>
    <property type="evidence" value="ECO:0000250"/>
    <property type="project" value="UniProtKB"/>
</dbReference>
<dbReference type="GO" id="GO:0005507">
    <property type="term" value="F:copper ion binding"/>
    <property type="evidence" value="ECO:0007669"/>
    <property type="project" value="InterPro"/>
</dbReference>
<dbReference type="GO" id="GO:0004129">
    <property type="term" value="F:cytochrome-c oxidase activity"/>
    <property type="evidence" value="ECO:0007669"/>
    <property type="project" value="UniProtKB-EC"/>
</dbReference>
<dbReference type="GO" id="GO:0042773">
    <property type="term" value="P:ATP synthesis coupled electron transport"/>
    <property type="evidence" value="ECO:0007669"/>
    <property type="project" value="TreeGrafter"/>
</dbReference>
<dbReference type="CDD" id="cd13912">
    <property type="entry name" value="CcO_II_C"/>
    <property type="match status" value="1"/>
</dbReference>
<dbReference type="FunFam" id="1.10.287.90:FF:000001">
    <property type="entry name" value="Cytochrome c oxidase subunit 2"/>
    <property type="match status" value="1"/>
</dbReference>
<dbReference type="FunFam" id="2.60.40.420:FF:000001">
    <property type="entry name" value="Cytochrome c oxidase subunit 2"/>
    <property type="match status" value="1"/>
</dbReference>
<dbReference type="Gene3D" id="1.10.287.90">
    <property type="match status" value="1"/>
</dbReference>
<dbReference type="Gene3D" id="2.60.40.420">
    <property type="entry name" value="Cupredoxins - blue copper proteins"/>
    <property type="match status" value="1"/>
</dbReference>
<dbReference type="InterPro" id="IPR045187">
    <property type="entry name" value="CcO_II"/>
</dbReference>
<dbReference type="InterPro" id="IPR002429">
    <property type="entry name" value="CcO_II-like_C"/>
</dbReference>
<dbReference type="InterPro" id="IPR034210">
    <property type="entry name" value="CcO_II_C"/>
</dbReference>
<dbReference type="InterPro" id="IPR001505">
    <property type="entry name" value="Copper_CuA"/>
</dbReference>
<dbReference type="InterPro" id="IPR008972">
    <property type="entry name" value="Cupredoxin"/>
</dbReference>
<dbReference type="InterPro" id="IPR014222">
    <property type="entry name" value="Cyt_c_oxidase_su2"/>
</dbReference>
<dbReference type="InterPro" id="IPR011759">
    <property type="entry name" value="Cyt_c_oxidase_su2_TM_dom"/>
</dbReference>
<dbReference type="InterPro" id="IPR036257">
    <property type="entry name" value="Cyt_c_oxidase_su2_TM_sf"/>
</dbReference>
<dbReference type="NCBIfam" id="TIGR02866">
    <property type="entry name" value="CoxB"/>
    <property type="match status" value="1"/>
</dbReference>
<dbReference type="PANTHER" id="PTHR22888:SF9">
    <property type="entry name" value="CYTOCHROME C OXIDASE SUBUNIT 2"/>
    <property type="match status" value="1"/>
</dbReference>
<dbReference type="PANTHER" id="PTHR22888">
    <property type="entry name" value="CYTOCHROME C OXIDASE, SUBUNIT II"/>
    <property type="match status" value="1"/>
</dbReference>
<dbReference type="Pfam" id="PF00116">
    <property type="entry name" value="COX2"/>
    <property type="match status" value="1"/>
</dbReference>
<dbReference type="Pfam" id="PF02790">
    <property type="entry name" value="COX2_TM"/>
    <property type="match status" value="1"/>
</dbReference>
<dbReference type="PRINTS" id="PR01166">
    <property type="entry name" value="CYCOXIDASEII"/>
</dbReference>
<dbReference type="SUPFAM" id="SSF49503">
    <property type="entry name" value="Cupredoxins"/>
    <property type="match status" value="1"/>
</dbReference>
<dbReference type="SUPFAM" id="SSF81464">
    <property type="entry name" value="Cytochrome c oxidase subunit II-like, transmembrane region"/>
    <property type="match status" value="1"/>
</dbReference>
<dbReference type="PROSITE" id="PS00078">
    <property type="entry name" value="COX2"/>
    <property type="match status" value="1"/>
</dbReference>
<dbReference type="PROSITE" id="PS50857">
    <property type="entry name" value="COX2_CUA"/>
    <property type="match status" value="1"/>
</dbReference>
<dbReference type="PROSITE" id="PS50999">
    <property type="entry name" value="COX2_TM"/>
    <property type="match status" value="1"/>
</dbReference>
<proteinExistence type="inferred from homology"/>
<geneLocation type="mitochondrion"/>
<name>COX2_TAMSO</name>
<evidence type="ECO:0000250" key="1">
    <source>
        <dbReference type="UniProtKB" id="P00403"/>
    </source>
</evidence>
<evidence type="ECO:0000250" key="2">
    <source>
        <dbReference type="UniProtKB" id="P00410"/>
    </source>
</evidence>
<evidence type="ECO:0000250" key="3">
    <source>
        <dbReference type="UniProtKB" id="P68530"/>
    </source>
</evidence>
<evidence type="ECO:0000305" key="4"/>
<protein>
    <recommendedName>
        <fullName>Cytochrome c oxidase subunit 2</fullName>
        <ecNumber>7.1.1.9</ecNumber>
    </recommendedName>
    <alternativeName>
        <fullName>Cytochrome c oxidase polypeptide II</fullName>
    </alternativeName>
</protein>
<reference key="1">
    <citation type="journal article" date="2000" name="J. Mammal. Evol.">
        <title>Molecular phylogeny of the chipmunk genus Tamias based on the mitochondrial cytochrome oxidase subunit II gene.</title>
        <authorList>
            <person name="Piaggio A.J."/>
            <person name="Spicer G.S."/>
        </authorList>
    </citation>
    <scope>NUCLEOTIDE SEQUENCE [GENOMIC DNA]</scope>
</reference>
<gene>
    <name type="primary">MT-CO2</name>
    <name type="synonym">COII</name>
    <name type="synonym">COX2</name>
    <name type="synonym">COXII</name>
    <name type="synonym">MTCO2</name>
</gene>
<feature type="chain" id="PRO_0000257860" description="Cytochrome c oxidase subunit 2">
    <location>
        <begin position="1"/>
        <end position="227"/>
    </location>
</feature>
<feature type="topological domain" description="Mitochondrial intermembrane" evidence="3">
    <location>
        <begin position="1"/>
        <end position="14"/>
    </location>
</feature>
<feature type="transmembrane region" description="Helical; Name=I" evidence="3">
    <location>
        <begin position="15"/>
        <end position="45"/>
    </location>
</feature>
<feature type="topological domain" description="Mitochondrial matrix" evidence="3">
    <location>
        <begin position="46"/>
        <end position="59"/>
    </location>
</feature>
<feature type="transmembrane region" description="Helical; Name=II" evidence="3">
    <location>
        <begin position="60"/>
        <end position="87"/>
    </location>
</feature>
<feature type="topological domain" description="Mitochondrial intermembrane" evidence="3">
    <location>
        <begin position="88"/>
        <end position="227"/>
    </location>
</feature>
<feature type="binding site" evidence="3">
    <location>
        <position position="161"/>
    </location>
    <ligand>
        <name>Cu cation</name>
        <dbReference type="ChEBI" id="CHEBI:23378"/>
        <label>A1</label>
    </ligand>
</feature>
<feature type="binding site" evidence="3">
    <location>
        <position position="196"/>
    </location>
    <ligand>
        <name>Cu cation</name>
        <dbReference type="ChEBI" id="CHEBI:23378"/>
        <label>A1</label>
    </ligand>
</feature>
<feature type="binding site" evidence="3">
    <location>
        <position position="196"/>
    </location>
    <ligand>
        <name>Cu cation</name>
        <dbReference type="ChEBI" id="CHEBI:23378"/>
        <label>A2</label>
    </ligand>
</feature>
<feature type="binding site" evidence="3">
    <location>
        <position position="198"/>
    </location>
    <ligand>
        <name>Cu cation</name>
        <dbReference type="ChEBI" id="CHEBI:23378"/>
        <label>A2</label>
    </ligand>
</feature>
<feature type="binding site" evidence="3">
    <location>
        <position position="198"/>
    </location>
    <ligand>
        <name>Mg(2+)</name>
        <dbReference type="ChEBI" id="CHEBI:18420"/>
        <note>ligand shared with MT-CO1</note>
    </ligand>
</feature>
<feature type="binding site" evidence="3">
    <location>
        <position position="200"/>
    </location>
    <ligand>
        <name>Cu cation</name>
        <dbReference type="ChEBI" id="CHEBI:23378"/>
        <label>A1</label>
    </ligand>
</feature>
<feature type="binding site" evidence="3">
    <location>
        <position position="200"/>
    </location>
    <ligand>
        <name>Cu cation</name>
        <dbReference type="ChEBI" id="CHEBI:23378"/>
        <label>A2</label>
    </ligand>
</feature>
<feature type="binding site" evidence="3">
    <location>
        <position position="204"/>
    </location>
    <ligand>
        <name>Cu cation</name>
        <dbReference type="ChEBI" id="CHEBI:23378"/>
        <label>A2</label>
    </ligand>
</feature>
<feature type="binding site" evidence="3">
    <location>
        <position position="207"/>
    </location>
    <ligand>
        <name>Cu cation</name>
        <dbReference type="ChEBI" id="CHEBI:23378"/>
        <label>A1</label>
    </ligand>
</feature>